<sequence>MANTLEQLKSYTTIVADTGDIEAIKRYQPEDATTNPSLILKAAQIPEYSALIDNAIAWAKLQSADIEQQIDDASDKLAVNIGVEILKLVPGRISTEVDARLSFDKEKSIAKAHKLVRLYQEAGVDKSRILIKLASTWEGICAAKELEQEGINCNLTLLFSFAQARACAEAGVYLISPFVGRILDWYKKDTGKDYDAVNDPGVVSVTEIYNYYKQHGYNTVVMGASFRNIGEIIELAGCDRLTIGPSLLEELANSQVTIQPKLIPASTTVAAGEPLTEAQFRWDFNQDPMAVDKLAEGIRNFAIDQGKLEVMLKAKLAN</sequence>
<name>TAL_SHESM</name>
<accession>Q0HFX9</accession>
<proteinExistence type="inferred from homology"/>
<protein>
    <recommendedName>
        <fullName evidence="2">Transaldolase</fullName>
        <ecNumber evidence="2">2.2.1.2</ecNumber>
    </recommendedName>
</protein>
<dbReference type="EC" id="2.2.1.2" evidence="2"/>
<dbReference type="EMBL" id="CP000446">
    <property type="protein sequence ID" value="ABI40038.1"/>
    <property type="molecule type" value="Genomic_DNA"/>
</dbReference>
<dbReference type="RefSeq" id="WP_011623714.1">
    <property type="nucleotide sequence ID" value="NC_008321.1"/>
</dbReference>
<dbReference type="SMR" id="Q0HFX9"/>
<dbReference type="KEGG" id="she:Shewmr4_2967"/>
<dbReference type="HOGENOM" id="CLU_047470_0_1_6"/>
<dbReference type="UniPathway" id="UPA00115">
    <property type="reaction ID" value="UER00414"/>
</dbReference>
<dbReference type="GO" id="GO:0005829">
    <property type="term" value="C:cytosol"/>
    <property type="evidence" value="ECO:0007669"/>
    <property type="project" value="TreeGrafter"/>
</dbReference>
<dbReference type="GO" id="GO:0004801">
    <property type="term" value="F:transaldolase activity"/>
    <property type="evidence" value="ECO:0000250"/>
    <property type="project" value="UniProtKB"/>
</dbReference>
<dbReference type="GO" id="GO:0005975">
    <property type="term" value="P:carbohydrate metabolic process"/>
    <property type="evidence" value="ECO:0007669"/>
    <property type="project" value="InterPro"/>
</dbReference>
<dbReference type="GO" id="GO:0006098">
    <property type="term" value="P:pentose-phosphate shunt"/>
    <property type="evidence" value="ECO:0007669"/>
    <property type="project" value="UniProtKB-UniRule"/>
</dbReference>
<dbReference type="CDD" id="cd00957">
    <property type="entry name" value="Transaldolase_TalAB"/>
    <property type="match status" value="1"/>
</dbReference>
<dbReference type="FunFam" id="3.20.20.70:FF:000002">
    <property type="entry name" value="Transaldolase"/>
    <property type="match status" value="1"/>
</dbReference>
<dbReference type="Gene3D" id="3.20.20.70">
    <property type="entry name" value="Aldolase class I"/>
    <property type="match status" value="1"/>
</dbReference>
<dbReference type="HAMAP" id="MF_00492">
    <property type="entry name" value="Transaldolase_1"/>
    <property type="match status" value="1"/>
</dbReference>
<dbReference type="InterPro" id="IPR013785">
    <property type="entry name" value="Aldolase_TIM"/>
</dbReference>
<dbReference type="InterPro" id="IPR001585">
    <property type="entry name" value="TAL/FSA"/>
</dbReference>
<dbReference type="InterPro" id="IPR004730">
    <property type="entry name" value="Transaldolase_1"/>
</dbReference>
<dbReference type="InterPro" id="IPR018225">
    <property type="entry name" value="Transaldolase_AS"/>
</dbReference>
<dbReference type="NCBIfam" id="NF009001">
    <property type="entry name" value="PRK12346.1"/>
    <property type="match status" value="1"/>
</dbReference>
<dbReference type="NCBIfam" id="TIGR00874">
    <property type="entry name" value="talAB"/>
    <property type="match status" value="1"/>
</dbReference>
<dbReference type="PANTHER" id="PTHR10683">
    <property type="entry name" value="TRANSALDOLASE"/>
    <property type="match status" value="1"/>
</dbReference>
<dbReference type="PANTHER" id="PTHR10683:SF18">
    <property type="entry name" value="TRANSALDOLASE"/>
    <property type="match status" value="1"/>
</dbReference>
<dbReference type="Pfam" id="PF00923">
    <property type="entry name" value="TAL_FSA"/>
    <property type="match status" value="1"/>
</dbReference>
<dbReference type="SUPFAM" id="SSF51569">
    <property type="entry name" value="Aldolase"/>
    <property type="match status" value="1"/>
</dbReference>
<dbReference type="PROSITE" id="PS01054">
    <property type="entry name" value="TRANSALDOLASE_1"/>
    <property type="match status" value="1"/>
</dbReference>
<dbReference type="PROSITE" id="PS00958">
    <property type="entry name" value="TRANSALDOLASE_2"/>
    <property type="match status" value="1"/>
</dbReference>
<comment type="function">
    <text evidence="2">Transaldolase is important for the balance of metabolites in the pentose-phosphate pathway.</text>
</comment>
<comment type="catalytic activity">
    <reaction evidence="2">
        <text>D-sedoheptulose 7-phosphate + D-glyceraldehyde 3-phosphate = D-erythrose 4-phosphate + beta-D-fructose 6-phosphate</text>
        <dbReference type="Rhea" id="RHEA:17053"/>
        <dbReference type="ChEBI" id="CHEBI:16897"/>
        <dbReference type="ChEBI" id="CHEBI:57483"/>
        <dbReference type="ChEBI" id="CHEBI:57634"/>
        <dbReference type="ChEBI" id="CHEBI:59776"/>
        <dbReference type="EC" id="2.2.1.2"/>
    </reaction>
</comment>
<comment type="pathway">
    <text evidence="2">Carbohydrate degradation; pentose phosphate pathway; D-glyceraldehyde 3-phosphate and beta-D-fructose 6-phosphate from D-ribose 5-phosphate and D-xylulose 5-phosphate (non-oxidative stage): step 2/3.</text>
</comment>
<comment type="subunit">
    <text evidence="1">Homodimer.</text>
</comment>
<comment type="subcellular location">
    <subcellularLocation>
        <location evidence="2">Cytoplasm</location>
    </subcellularLocation>
</comment>
<comment type="similarity">
    <text evidence="2">Belongs to the transaldolase family. Type 1 subfamily.</text>
</comment>
<feature type="chain" id="PRO_1000014528" description="Transaldolase">
    <location>
        <begin position="1"/>
        <end position="318"/>
    </location>
</feature>
<feature type="active site" description="Schiff-base intermediate with substrate" evidence="2">
    <location>
        <position position="132"/>
    </location>
</feature>
<gene>
    <name evidence="2" type="primary">tal</name>
    <name type="ordered locus">Shewmr4_2967</name>
</gene>
<organism>
    <name type="scientific">Shewanella sp. (strain MR-4)</name>
    <dbReference type="NCBI Taxonomy" id="60480"/>
    <lineage>
        <taxon>Bacteria</taxon>
        <taxon>Pseudomonadati</taxon>
        <taxon>Pseudomonadota</taxon>
        <taxon>Gammaproteobacteria</taxon>
        <taxon>Alteromonadales</taxon>
        <taxon>Shewanellaceae</taxon>
        <taxon>Shewanella</taxon>
    </lineage>
</organism>
<reference key="1">
    <citation type="submission" date="2006-08" db="EMBL/GenBank/DDBJ databases">
        <title>Complete sequence of Shewanella sp. MR-4.</title>
        <authorList>
            <consortium name="US DOE Joint Genome Institute"/>
            <person name="Copeland A."/>
            <person name="Lucas S."/>
            <person name="Lapidus A."/>
            <person name="Barry K."/>
            <person name="Detter J.C."/>
            <person name="Glavina del Rio T."/>
            <person name="Hammon N."/>
            <person name="Israni S."/>
            <person name="Dalin E."/>
            <person name="Tice H."/>
            <person name="Pitluck S."/>
            <person name="Kiss H."/>
            <person name="Brettin T."/>
            <person name="Bruce D."/>
            <person name="Han C."/>
            <person name="Tapia R."/>
            <person name="Gilna P."/>
            <person name="Schmutz J."/>
            <person name="Larimer F."/>
            <person name="Land M."/>
            <person name="Hauser L."/>
            <person name="Kyrpides N."/>
            <person name="Mikhailova N."/>
            <person name="Nealson K."/>
            <person name="Konstantinidis K."/>
            <person name="Klappenbach J."/>
            <person name="Tiedje J."/>
            <person name="Richardson P."/>
        </authorList>
    </citation>
    <scope>NUCLEOTIDE SEQUENCE [LARGE SCALE GENOMIC DNA]</scope>
    <source>
        <strain>MR-4</strain>
    </source>
</reference>
<keyword id="KW-0963">Cytoplasm</keyword>
<keyword id="KW-0570">Pentose shunt</keyword>
<keyword id="KW-0704">Schiff base</keyword>
<keyword id="KW-0808">Transferase</keyword>
<evidence type="ECO:0000250" key="1"/>
<evidence type="ECO:0000255" key="2">
    <source>
        <dbReference type="HAMAP-Rule" id="MF_00492"/>
    </source>
</evidence>